<comment type="function">
    <text evidence="1 6 7 9 10 11">Mechanosensitive cation channel with low conductance and high activation threshold (PubMed:37543036, PubMed:38127458). Osmosensitive cation channel preferentially activated by hypotonic stress (PubMed:37543036, PubMed:38127458). Also acts as a phospholipid scramblase in response to changes in membrane structure: upon changes in membrane curvature and thickness, alters its conformation and translocates phospholipids, such as phosphatidylcholine and sphingomyelin, thereby controlling plasma membrane lipid distribution (PubMed:39217145, PubMed:39424995, PubMed:39716028). Forms a heterodimer with SLC19A2, which mediates phospholipid scramblase activity following Ca(2+) stimulation (By similarity). Expressed in excitatory neurons of the subfornical organ and functions as a thirst receptor that mediates neuronal response to hyperosmolality to drive thirst and drinking behavior (By similarity). Facilitates intestinal motility by promoting proliferation of intestinal stem cells (By similarity). Essential for the baby's first breath and respiration throughout life (PubMed:38127458). Upon lung inflation conducts cation currents in alveolar type 1 and 2 cells triggering lamellar body exocytosis and surfactant secretion into airspace (PubMed:38127458). Acts as an osmosensor in cochlear outer hair cells (OHCs) where it mediates calcium influx and regulatory volume decrease response (By similarity). Required for the maintenance of OHC morphology, OHC survival and normal hearing (By similarity).</text>
</comment>
<comment type="catalytic activity">
    <reaction evidence="7">
        <text>Ca(2+)(in) = Ca(2+)(out)</text>
        <dbReference type="Rhea" id="RHEA:29671"/>
        <dbReference type="ChEBI" id="CHEBI:29108"/>
    </reaction>
</comment>
<comment type="catalytic activity">
    <reaction evidence="1">
        <text>Mg(2+)(in) = Mg(2+)(out)</text>
        <dbReference type="Rhea" id="RHEA:29827"/>
        <dbReference type="ChEBI" id="CHEBI:18420"/>
    </reaction>
</comment>
<comment type="catalytic activity">
    <reaction evidence="7">
        <text>K(+)(in) = K(+)(out)</text>
        <dbReference type="Rhea" id="RHEA:29463"/>
        <dbReference type="ChEBI" id="CHEBI:29103"/>
    </reaction>
</comment>
<comment type="catalytic activity">
    <reaction evidence="7">
        <text>Na(+)(in) = Na(+)(out)</text>
        <dbReference type="Rhea" id="RHEA:34963"/>
        <dbReference type="ChEBI" id="CHEBI:29101"/>
    </reaction>
</comment>
<comment type="catalytic activity">
    <reaction evidence="1">
        <text>Cs(+)(in) = Cs(+)(out)</text>
        <dbReference type="Rhea" id="RHEA:78555"/>
        <dbReference type="ChEBI" id="CHEBI:49547"/>
    </reaction>
</comment>
<comment type="catalytic activity">
    <reaction evidence="1">
        <text>a 1,2-diacyl-sn-glycero-3-phosphocholine(in) = a 1,2-diacyl-sn-glycero-3-phosphocholine(out)</text>
        <dbReference type="Rhea" id="RHEA:38571"/>
        <dbReference type="ChEBI" id="CHEBI:57643"/>
    </reaction>
</comment>
<comment type="catalytic activity">
    <reaction evidence="1">
        <text>a sphingomyelin(in) = a sphingomyelin(out)</text>
        <dbReference type="Rhea" id="RHEA:39727"/>
        <dbReference type="ChEBI" id="CHEBI:17636"/>
    </reaction>
</comment>
<comment type="subunit">
    <text evidence="1 6 8">Monomer (PubMed:37543036, PubMed:38570680). Interacts with SLC19A2; interaction is required for the phospholipid scramblase activity (By similarity).</text>
</comment>
<comment type="subcellular location">
    <subcellularLocation>
        <location evidence="5 6 7 9 11">Cell membrane</location>
        <topology evidence="6">Multi-pass membrane protein</topology>
    </subcellularLocation>
    <subcellularLocation>
        <location evidence="1">Endoplasmic reticulum membrane</location>
        <topology evidence="6">Multi-pass membrane protein</topology>
    </subcellularLocation>
    <subcellularLocation>
        <location evidence="11">Lysosome membrane</location>
        <topology evidence="6">Multi-pass membrane protein</topology>
    </subcellularLocation>
    <subcellularLocation>
        <location evidence="7">Early endosome membrane</location>
        <topology evidence="6">Multi-pass membrane protein</topology>
    </subcellularLocation>
    <text evidence="1">Colocalizes with cortical F-actin (By similarity). Localizes at lamellar body membrane in alveolar type 2 cells (By similarity).</text>
</comment>
<comment type="alternative products">
    <event type="alternative splicing"/>
    <isoform>
        <id>Q5T3F8-1</id>
        <name>1</name>
        <sequence type="displayed"/>
    </isoform>
    <isoform>
        <id>Q5T3F8-2</id>
        <name>2</name>
        <sequence type="described" ref="VSP_023889 VSP_023890"/>
    </isoform>
    <isoform>
        <id>Q5T3F8-3</id>
        <name>3</name>
        <sequence type="described" ref="VSP_023891 VSP_023892"/>
    </isoform>
</comment>
<comment type="PTM">
    <text evidence="1">Palmitoylation is required for localization to the plasma membrane and stability.</text>
</comment>
<comment type="PTM">
    <text evidence="6">N-Glycosylated.</text>
</comment>
<comment type="disease">
    <text evidence="5 9 10 11">TMEM63B defects may be a cause of neurodevelomental disorder, characterized by severe early-onset developmental and epileptic encephalopathy (DEE), intellectual disability, and severe motor and cortical visual impairment associated with progressive neurodegenerative brain changes.</text>
</comment>
<comment type="similarity">
    <text evidence="17">Belongs to the CSC1 (TC 1.A.17) family.</text>
</comment>
<comment type="sequence caution" evidence="17">
    <conflict type="frameshift">
        <sequence resource="EMBL-CDS" id="CAH10540"/>
    </conflict>
</comment>
<gene>
    <name evidence="15 19" type="primary">TMEM63B</name>
    <name evidence="19" type="synonym">C6orf110</name>
</gene>
<sequence length="832" mass="94958">MLPFLLATLGTTALNNSNPKDYCYSARIRSTVLQGLPFGGVPTVLALDFMCFLALLFLFSILRKVAWDYGRLALVTDADRLRRQERDRVEQEYVASAMHGDSHDRYERLTSVSSSVDFDQRDNGFCSWLTAIFRIKDDEIRDKCGGDAVHYLSFQRHIIGLLVVVGVLSVGIVLPVNFSGDLLENNAYSFGRTTIANLKSGNNLLWLHTSFAFLYLLLTVYSMRRHTSKMRYKEDDLVKRTLFINGISKYAESEKIKKHFEEAYPNCTVLEARPCYNVARLMFLDAERKKAERGKLYFTNLQSKENVPTMINPKPCGHLCCCVVRGCEQVEAIEYYTKLEQKLKEDYKREKEKVNEKPLGMAFVTFHNETITAIILKDFNVCKCQGCTCRGEPRPSSCSESLHISNWTVSYAPDPQNIYWEHLSIRGFIWWLRCLVINVVLFILLFFLTTPAIIITTMDKFNVTKPVEYLNNPIITQFFPTLLLWCFSALLPTIVYYSAFFEAHWTRSGENRTTMHKCYTFLIFMVLLLPSLGLSSLDLFFRWLFDKKFLAEAAIRFECVFLPDNGAFFVNYVIASAFIGNAMDLLRIPGLLMYMIRLCLARSAAERRNVKRHQAYEFQFGAAYAWMMCVFTVVMTYSITCPIIVPFGLMYMLLKHLVDRYNLYYAYLPAKLDKKIHSGAVNQVVAAPILCLFWLLFFSTMRTGFLAPTSMFTFVVLVITIVICLCHVCFGHFKYLSAHNYKIEHTETDTVDPRSNGRPPTAAAVPKSAKYIAQVLQDSEVDGDGDGAPGSSGDEPPSSSSQDEELLMPPDALTDTDFQSCEDSLIENEIHQ</sequence>
<evidence type="ECO:0000250" key="1">
    <source>
        <dbReference type="UniProtKB" id="Q3TWI9"/>
    </source>
</evidence>
<evidence type="ECO:0000255" key="2">
    <source>
        <dbReference type="PROSITE-ProRule" id="PRU00498"/>
    </source>
</evidence>
<evidence type="ECO:0000256" key="3">
    <source>
        <dbReference type="SAM" id="MobiDB-lite"/>
    </source>
</evidence>
<evidence type="ECO:0000269" key="4">
    <source>
    </source>
</evidence>
<evidence type="ECO:0000269" key="5">
    <source>
    </source>
</evidence>
<evidence type="ECO:0000269" key="6">
    <source>
    </source>
</evidence>
<evidence type="ECO:0000269" key="7">
    <source>
    </source>
</evidence>
<evidence type="ECO:0000269" key="8">
    <source>
    </source>
</evidence>
<evidence type="ECO:0000269" key="9">
    <source>
    </source>
</evidence>
<evidence type="ECO:0000269" key="10">
    <source>
    </source>
</evidence>
<evidence type="ECO:0000269" key="11">
    <source>
    </source>
</evidence>
<evidence type="ECO:0000303" key="12">
    <source>
    </source>
</evidence>
<evidence type="ECO:0000303" key="13">
    <source>
    </source>
</evidence>
<evidence type="ECO:0000303" key="14">
    <source>
    </source>
</evidence>
<evidence type="ECO:0000303" key="15">
    <source>
    </source>
</evidence>
<evidence type="ECO:0000303" key="16">
    <source>
    </source>
</evidence>
<evidence type="ECO:0000305" key="17"/>
<evidence type="ECO:0000305" key="18">
    <source>
    </source>
</evidence>
<evidence type="ECO:0000312" key="19">
    <source>
        <dbReference type="HGNC" id="HGNC:17735"/>
    </source>
</evidence>
<evidence type="ECO:0007744" key="20">
    <source>
        <dbReference type="PDB" id="8EHX"/>
    </source>
</evidence>
<evidence type="ECO:0007744" key="21">
    <source>
        <dbReference type="PDB" id="8XW4"/>
    </source>
</evidence>
<evidence type="ECO:0007744" key="22">
    <source>
    </source>
</evidence>
<evidence type="ECO:0007744" key="23">
    <source>
    </source>
</evidence>
<proteinExistence type="evidence at protein level"/>
<name>TM63B_HUMAN</name>
<feature type="chain" id="PRO_0000280728" description="Mechanosensitive cation channel TMEM63B">
    <location>
        <begin position="1"/>
        <end position="832"/>
    </location>
</feature>
<feature type="topological domain" description="Extracellular" evidence="18 20">
    <location>
        <begin position="1"/>
        <end position="40"/>
    </location>
</feature>
<feature type="transmembrane region" description="Helical; Name=TM0" evidence="18 20">
    <location>
        <begin position="41"/>
        <end position="65"/>
    </location>
</feature>
<feature type="topological domain" description="Cytoplasmic" evidence="18 20">
    <location>
        <begin position="66"/>
        <end position="145"/>
    </location>
</feature>
<feature type="transmembrane region" description="Helical; Name=TM1" evidence="18 20">
    <location>
        <begin position="146"/>
        <end position="178"/>
    </location>
</feature>
<feature type="topological domain" description="Extracellular" evidence="18 20">
    <location>
        <begin position="179"/>
        <end position="202"/>
    </location>
</feature>
<feature type="transmembrane region" description="Helical; Name=TM2" evidence="18 20">
    <location>
        <begin position="203"/>
        <end position="227"/>
    </location>
</feature>
<feature type="topological domain" description="Cytoplasmic" evidence="18 20">
    <location>
        <begin position="228"/>
        <end position="427"/>
    </location>
</feature>
<feature type="transmembrane region" description="Helical; Name=TM3" evidence="18 20">
    <location>
        <begin position="428"/>
        <end position="457"/>
    </location>
</feature>
<feature type="topological domain" description="Extracellular" evidence="18 20">
    <location>
        <begin position="458"/>
        <end position="472"/>
    </location>
</feature>
<feature type="transmembrane region" description="Helical; Name=TM4" evidence="18 20">
    <location>
        <begin position="473"/>
        <end position="502"/>
    </location>
</feature>
<feature type="topological domain" description="Cytoplasmic" evidence="18 20">
    <location>
        <begin position="503"/>
        <end position="506"/>
    </location>
</feature>
<feature type="transmembrane region" description="Helical; Name=TM5" evidence="18 20">
    <location>
        <begin position="507"/>
        <end position="543"/>
    </location>
</feature>
<feature type="topological domain" description="Extracellular" evidence="18 20">
    <location>
        <begin position="544"/>
        <end position="566"/>
    </location>
</feature>
<feature type="transmembrane region" description="Helical; Name=TM6" evidence="18 20">
    <location>
        <begin position="567"/>
        <end position="599"/>
    </location>
</feature>
<feature type="topological domain" description="Cytoplasmic" evidence="18 20">
    <location>
        <begin position="600"/>
        <end position="619"/>
    </location>
</feature>
<feature type="transmembrane region" description="Helical; Name=TM7" evidence="18 20">
    <location>
        <begin position="620"/>
        <end position="638"/>
    </location>
</feature>
<feature type="topological domain" description="Extracellular" evidence="18 20">
    <location>
        <begin position="639"/>
        <end position="641"/>
    </location>
</feature>
<feature type="transmembrane region" description="Helical; Name=TM8" evidence="18 20">
    <location>
        <begin position="642"/>
        <end position="666"/>
    </location>
</feature>
<feature type="topological domain" description="Cytoplasmic" evidence="18 20">
    <location>
        <begin position="667"/>
        <end position="673"/>
    </location>
</feature>
<feature type="transmembrane region" description="Helical; Name=TM9" evidence="18 20">
    <location>
        <begin position="674"/>
        <end position="702"/>
    </location>
</feature>
<feature type="topological domain" description="Extracellular" evidence="18 20">
    <location>
        <begin position="703"/>
        <end position="707"/>
    </location>
</feature>
<feature type="transmembrane region" description="Helical; Name=TM10" evidence="18 20">
    <location>
        <begin position="708"/>
        <end position="728"/>
    </location>
</feature>
<feature type="topological domain" description="Cytoplasmic" evidence="18 20">
    <location>
        <begin position="729"/>
        <end position="832"/>
    </location>
</feature>
<feature type="region of interest" description="Intracellular linker IL2; confers mechanosensitivity" evidence="14">
    <location>
        <begin position="231"/>
        <end position="426"/>
    </location>
</feature>
<feature type="region of interest" description="Gating helix" evidence="14">
    <location>
        <begin position="567"/>
        <end position="599"/>
    </location>
</feature>
<feature type="region of interest" description="Disordered" evidence="3">
    <location>
        <begin position="780"/>
        <end position="814"/>
    </location>
</feature>
<feature type="short sequence motif" description="Mediates endoplasmic reticulum retention" evidence="1">
    <location>
        <begin position="86"/>
        <end position="88"/>
    </location>
</feature>
<feature type="compositionally biased region" description="Low complexity" evidence="3">
    <location>
        <begin position="789"/>
        <end position="801"/>
    </location>
</feature>
<feature type="modified residue" description="Phosphoserine" evidence="23">
    <location>
        <position position="111"/>
    </location>
</feature>
<feature type="modified residue" description="Phosphoserine" evidence="1">
    <location>
        <position position="113"/>
    </location>
</feature>
<feature type="modified residue" description="Phosphoserine" evidence="22">
    <location>
        <position position="114"/>
    </location>
</feature>
<feature type="modified residue" description="Phosphoserine" evidence="1">
    <location>
        <position position="115"/>
    </location>
</feature>
<feature type="lipid moiety-binding region" description="S-palmitoyl cysteine" evidence="1">
    <location>
        <position position="51"/>
    </location>
</feature>
<feature type="lipid moiety-binding region" description="S-palmitoyl cysteine" evidence="1">
    <location>
        <position position="126"/>
    </location>
</feature>
<feature type="lipid moiety-binding region" description="S-palmitoyl cysteine" evidence="1">
    <location>
        <position position="382"/>
    </location>
</feature>
<feature type="lipid moiety-binding region" description="S-palmitoyl cysteine" evidence="1">
    <location>
        <position position="398"/>
    </location>
</feature>
<feature type="lipid moiety-binding region" description="S-palmitoyl cysteine" evidence="1">
    <location>
        <position position="726"/>
    </location>
</feature>
<feature type="lipid moiety-binding region" description="S-palmitoyl cysteine" evidence="1">
    <location>
        <position position="729"/>
    </location>
</feature>
<feature type="glycosylation site" description="N-linked (GlcNAc...) asparagine" evidence="2">
    <location>
        <position position="462"/>
    </location>
</feature>
<feature type="splice variant" id="VSP_023889" description="In isoform 2." evidence="12">
    <original>NPIITQFFPTLLLWCFSALL</original>
    <variation>VRPHAPVTFHAGSQHTDTRP</variation>
    <location>
        <begin position="472"/>
        <end position="491"/>
    </location>
</feature>
<feature type="splice variant" id="VSP_023890" description="In isoform 2." evidence="12">
    <location>
        <begin position="492"/>
        <end position="832"/>
    </location>
</feature>
<feature type="splice variant" id="VSP_023891" description="In isoform 3." evidence="13">
    <original>G</original>
    <variation>D</variation>
    <location>
        <position position="704"/>
    </location>
</feature>
<feature type="splice variant" id="VSP_023892" description="In isoform 3." evidence="13">
    <location>
        <begin position="705"/>
        <end position="832"/>
    </location>
</feature>
<feature type="sequence variant" id="VAR_090281" description="Found in patients with neurodevelomental disorder; does not affect localization to the plasma membrane; constitutive phospholipid scramblase activity." evidence="5 9 10 11">
    <original>V</original>
    <variation>M</variation>
    <location>
        <position position="44"/>
    </location>
</feature>
<feature type="sequence variant" id="VAR_031192" description="In dbSNP:rs4714759." evidence="4">
    <original>V</original>
    <variation>M</variation>
    <location>
        <position position="307"/>
    </location>
</feature>
<feature type="sequence variant" id="VAR_090282" description="Found in patients with neurodevelomental disorder; does not affect localization to the plasma membrane; abolished phospholipid scramblase activity." evidence="5 9 11">
    <original>R</original>
    <variation>H</variation>
    <location>
        <position position="433"/>
    </location>
</feature>
<feature type="sequence variant" id="VAR_090283" description="Found in patients with neurodevelomental disorder; constitutive phospholipid scramblase activity." evidence="5 9 11">
    <original>D</original>
    <variation>E</variation>
    <location>
        <position position="459"/>
    </location>
</feature>
<feature type="sequence variant" id="VAR_090284" description="Found in patients with neurodevelomental disorder; constitutive phospholipid scramblase activity." evidence="5 11">
    <original>V</original>
    <variation>I</variation>
    <location>
        <position position="463"/>
    </location>
</feature>
<feature type="sequence variant" id="VAR_090285" description="Found in patients with neurodevelomental disorder; constitutive phospholipid scramblase activity." evidence="5 9 11">
    <location>
        <position position="475"/>
    </location>
</feature>
<feature type="sequence variant" id="VAR_090286" description="Found in patients with neurodevelomental disorder; does not affect localization to the plasma membrane; constitutive phospholipid scramblase activity." evidence="5 11">
    <original>T</original>
    <variation>N</variation>
    <location>
        <position position="481"/>
    </location>
</feature>
<feature type="sequence variant" id="VAR_090287" description="Found in patients with neurodevelomental disorder; constitutive phospholipid scramblase activity." evidence="5 11">
    <original>G</original>
    <variation>C</variation>
    <location>
        <position position="580"/>
    </location>
</feature>
<feature type="sequence variant" id="VAR_090288" description="Found in patients with neurodevelomental disorder; does not affect localization to the plasma membrane; constitutive phospholipid scramblase activity." evidence="5 11">
    <original>G</original>
    <variation>S</variation>
    <location>
        <position position="580"/>
    </location>
</feature>
<feature type="sequence variant" id="VAR_090289" description="Found in patients with neurodevelomental disorder; does not affect localization to the plasma membrane; constitutive phospholipid scramblase activity." evidence="5 9 11">
    <original>R</original>
    <variation>T</variation>
    <location>
        <position position="660"/>
    </location>
</feature>
<feature type="sequence variant" id="VAR_090290" description="Found in patients with neurodevelomental disorder; does not affect localization to the plasma membrane; constitutive phospholipid scramblase activity." evidence="5 11">
    <original>F</original>
    <variation>L</variation>
    <location>
        <position position="697"/>
    </location>
</feature>
<feature type="mutagenesis site" description="Significant loss of mechanosensitive ion channel activity but no effect on its localization to the cell membrane." evidence="6">
    <original>D</original>
    <variation>K</variation>
    <location>
        <position position="584"/>
    </location>
</feature>
<feature type="sequence conflict" description="In Ref. 1; BAC04207." evidence="17" ref="1">
    <original>F</original>
    <variation>L</variation>
    <location>
        <position position="298"/>
    </location>
</feature>
<protein>
    <recommendedName>
        <fullName evidence="17">Mechanosensitive cation channel TMEM63B</fullName>
    </recommendedName>
    <alternativeName>
        <fullName evidence="15 16">Transmembrane protein 63B</fullName>
        <shortName evidence="16">hTMEM63B</shortName>
    </alternativeName>
</protein>
<accession>Q5T3F8</accession>
<accession>B9EGU3</accession>
<accession>Q5T3F9</accession>
<accession>Q6AHX4</accession>
<accession>Q6P5A0</accession>
<accession>Q8N219</accession>
<accession>Q8NDE1</accession>
<accession>Q9NSG5</accession>
<reference key="1">
    <citation type="journal article" date="2004" name="Nat. Genet.">
        <title>Complete sequencing and characterization of 21,243 full-length human cDNAs.</title>
        <authorList>
            <person name="Ota T."/>
            <person name="Suzuki Y."/>
            <person name="Nishikawa T."/>
            <person name="Otsuki T."/>
            <person name="Sugiyama T."/>
            <person name="Irie R."/>
            <person name="Wakamatsu A."/>
            <person name="Hayashi K."/>
            <person name="Sato H."/>
            <person name="Nagai K."/>
            <person name="Kimura K."/>
            <person name="Makita H."/>
            <person name="Sekine M."/>
            <person name="Obayashi M."/>
            <person name="Nishi T."/>
            <person name="Shibahara T."/>
            <person name="Tanaka T."/>
            <person name="Ishii S."/>
            <person name="Yamamoto J."/>
            <person name="Saito K."/>
            <person name="Kawai Y."/>
            <person name="Isono Y."/>
            <person name="Nakamura Y."/>
            <person name="Nagahari K."/>
            <person name="Murakami K."/>
            <person name="Yasuda T."/>
            <person name="Iwayanagi T."/>
            <person name="Wagatsuma M."/>
            <person name="Shiratori A."/>
            <person name="Sudo H."/>
            <person name="Hosoiri T."/>
            <person name="Kaku Y."/>
            <person name="Kodaira H."/>
            <person name="Kondo H."/>
            <person name="Sugawara M."/>
            <person name="Takahashi M."/>
            <person name="Kanda K."/>
            <person name="Yokoi T."/>
            <person name="Furuya T."/>
            <person name="Kikkawa E."/>
            <person name="Omura Y."/>
            <person name="Abe K."/>
            <person name="Kamihara K."/>
            <person name="Katsuta N."/>
            <person name="Sato K."/>
            <person name="Tanikawa M."/>
            <person name="Yamazaki M."/>
            <person name="Ninomiya K."/>
            <person name="Ishibashi T."/>
            <person name="Yamashita H."/>
            <person name="Murakawa K."/>
            <person name="Fujimori K."/>
            <person name="Tanai H."/>
            <person name="Kimata M."/>
            <person name="Watanabe M."/>
            <person name="Hiraoka S."/>
            <person name="Chiba Y."/>
            <person name="Ishida S."/>
            <person name="Ono Y."/>
            <person name="Takiguchi S."/>
            <person name="Watanabe S."/>
            <person name="Yosida M."/>
            <person name="Hotuta T."/>
            <person name="Kusano J."/>
            <person name="Kanehori K."/>
            <person name="Takahashi-Fujii A."/>
            <person name="Hara H."/>
            <person name="Tanase T.-O."/>
            <person name="Nomura Y."/>
            <person name="Togiya S."/>
            <person name="Komai F."/>
            <person name="Hara R."/>
            <person name="Takeuchi K."/>
            <person name="Arita M."/>
            <person name="Imose N."/>
            <person name="Musashino K."/>
            <person name="Yuuki H."/>
            <person name="Oshima A."/>
            <person name="Sasaki N."/>
            <person name="Aotsuka S."/>
            <person name="Yoshikawa Y."/>
            <person name="Matsunawa H."/>
            <person name="Ichihara T."/>
            <person name="Shiohata N."/>
            <person name="Sano S."/>
            <person name="Moriya S."/>
            <person name="Momiyama H."/>
            <person name="Satoh N."/>
            <person name="Takami S."/>
            <person name="Terashima Y."/>
            <person name="Suzuki O."/>
            <person name="Nakagawa S."/>
            <person name="Senoh A."/>
            <person name="Mizoguchi H."/>
            <person name="Goto Y."/>
            <person name="Shimizu F."/>
            <person name="Wakebe H."/>
            <person name="Hishigaki H."/>
            <person name="Watanabe T."/>
            <person name="Sugiyama A."/>
            <person name="Takemoto M."/>
            <person name="Kawakami B."/>
            <person name="Yamazaki M."/>
            <person name="Watanabe K."/>
            <person name="Kumagai A."/>
            <person name="Itakura S."/>
            <person name="Fukuzumi Y."/>
            <person name="Fujimori Y."/>
            <person name="Komiyama M."/>
            <person name="Tashiro H."/>
            <person name="Tanigami A."/>
            <person name="Fujiwara T."/>
            <person name="Ono T."/>
            <person name="Yamada K."/>
            <person name="Fujii Y."/>
            <person name="Ozaki K."/>
            <person name="Hirao M."/>
            <person name="Ohmori Y."/>
            <person name="Kawabata A."/>
            <person name="Hikiji T."/>
            <person name="Kobatake N."/>
            <person name="Inagaki H."/>
            <person name="Ikema Y."/>
            <person name="Okamoto S."/>
            <person name="Okitani R."/>
            <person name="Kawakami T."/>
            <person name="Noguchi S."/>
            <person name="Itoh T."/>
            <person name="Shigeta K."/>
            <person name="Senba T."/>
            <person name="Matsumura K."/>
            <person name="Nakajima Y."/>
            <person name="Mizuno T."/>
            <person name="Morinaga M."/>
            <person name="Sasaki M."/>
            <person name="Togashi T."/>
            <person name="Oyama M."/>
            <person name="Hata H."/>
            <person name="Watanabe M."/>
            <person name="Komatsu T."/>
            <person name="Mizushima-Sugano J."/>
            <person name="Satoh T."/>
            <person name="Shirai Y."/>
            <person name="Takahashi Y."/>
            <person name="Nakagawa K."/>
            <person name="Okumura K."/>
            <person name="Nagase T."/>
            <person name="Nomura N."/>
            <person name="Kikuchi H."/>
            <person name="Masuho Y."/>
            <person name="Yamashita R."/>
            <person name="Nakai K."/>
            <person name="Yada T."/>
            <person name="Nakamura Y."/>
            <person name="Ohara O."/>
            <person name="Isogai T."/>
            <person name="Sugano S."/>
        </authorList>
    </citation>
    <scope>NUCLEOTIDE SEQUENCE [LARGE SCALE MRNA] (ISOFORM 2)</scope>
    <source>
        <tissue>Thymus</tissue>
    </source>
</reference>
<reference key="2">
    <citation type="journal article" date="2007" name="BMC Genomics">
        <title>The full-ORF clone resource of the German cDNA consortium.</title>
        <authorList>
            <person name="Bechtel S."/>
            <person name="Rosenfelder H."/>
            <person name="Duda A."/>
            <person name="Schmidt C.P."/>
            <person name="Ernst U."/>
            <person name="Wellenreuther R."/>
            <person name="Mehrle A."/>
            <person name="Schuster C."/>
            <person name="Bahr A."/>
            <person name="Bloecker H."/>
            <person name="Heubner D."/>
            <person name="Hoerlein A."/>
            <person name="Michel G."/>
            <person name="Wedler H."/>
            <person name="Koehrer K."/>
            <person name="Ottenwaelder B."/>
            <person name="Poustka A."/>
            <person name="Wiemann S."/>
            <person name="Schupp I."/>
        </authorList>
    </citation>
    <scope>NUCLEOTIDE SEQUENCE [LARGE SCALE MRNA] (ISOFORM 1)</scope>
    <scope>NUCLEOTIDE SEQUENCE [LARGE SCALE MRNA] OF 186-832 (ISOFORM 3)</scope>
    <scope>VARIANT MET-307</scope>
    <source>
        <tissue>Endometrial adenocarcinoma</tissue>
        <tissue>Testis</tissue>
    </source>
</reference>
<reference key="3">
    <citation type="journal article" date="2003" name="Nature">
        <title>The DNA sequence and analysis of human chromosome 6.</title>
        <authorList>
            <person name="Mungall A.J."/>
            <person name="Palmer S.A."/>
            <person name="Sims S.K."/>
            <person name="Edwards C.A."/>
            <person name="Ashurst J.L."/>
            <person name="Wilming L."/>
            <person name="Jones M.C."/>
            <person name="Horton R."/>
            <person name="Hunt S.E."/>
            <person name="Scott C.E."/>
            <person name="Gilbert J.G.R."/>
            <person name="Clamp M.E."/>
            <person name="Bethel G."/>
            <person name="Milne S."/>
            <person name="Ainscough R."/>
            <person name="Almeida J.P."/>
            <person name="Ambrose K.D."/>
            <person name="Andrews T.D."/>
            <person name="Ashwell R.I.S."/>
            <person name="Babbage A.K."/>
            <person name="Bagguley C.L."/>
            <person name="Bailey J."/>
            <person name="Banerjee R."/>
            <person name="Barker D.J."/>
            <person name="Barlow K.F."/>
            <person name="Bates K."/>
            <person name="Beare D.M."/>
            <person name="Beasley H."/>
            <person name="Beasley O."/>
            <person name="Bird C.P."/>
            <person name="Blakey S.E."/>
            <person name="Bray-Allen S."/>
            <person name="Brook J."/>
            <person name="Brown A.J."/>
            <person name="Brown J.Y."/>
            <person name="Burford D.C."/>
            <person name="Burrill W."/>
            <person name="Burton J."/>
            <person name="Carder C."/>
            <person name="Carter N.P."/>
            <person name="Chapman J.C."/>
            <person name="Clark S.Y."/>
            <person name="Clark G."/>
            <person name="Clee C.M."/>
            <person name="Clegg S."/>
            <person name="Cobley V."/>
            <person name="Collier R.E."/>
            <person name="Collins J.E."/>
            <person name="Colman L.K."/>
            <person name="Corby N.R."/>
            <person name="Coville G.J."/>
            <person name="Culley K.M."/>
            <person name="Dhami P."/>
            <person name="Davies J."/>
            <person name="Dunn M."/>
            <person name="Earthrowl M.E."/>
            <person name="Ellington A.E."/>
            <person name="Evans K.A."/>
            <person name="Faulkner L."/>
            <person name="Francis M.D."/>
            <person name="Frankish A."/>
            <person name="Frankland J."/>
            <person name="French L."/>
            <person name="Garner P."/>
            <person name="Garnett J."/>
            <person name="Ghori M.J."/>
            <person name="Gilby L.M."/>
            <person name="Gillson C.J."/>
            <person name="Glithero R.J."/>
            <person name="Grafham D.V."/>
            <person name="Grant M."/>
            <person name="Gribble S."/>
            <person name="Griffiths C."/>
            <person name="Griffiths M.N.D."/>
            <person name="Hall R."/>
            <person name="Halls K.S."/>
            <person name="Hammond S."/>
            <person name="Harley J.L."/>
            <person name="Hart E.A."/>
            <person name="Heath P.D."/>
            <person name="Heathcott R."/>
            <person name="Holmes S.J."/>
            <person name="Howden P.J."/>
            <person name="Howe K.L."/>
            <person name="Howell G.R."/>
            <person name="Huckle E."/>
            <person name="Humphray S.J."/>
            <person name="Humphries M.D."/>
            <person name="Hunt A.R."/>
            <person name="Johnson C.M."/>
            <person name="Joy A.A."/>
            <person name="Kay M."/>
            <person name="Keenan S.J."/>
            <person name="Kimberley A.M."/>
            <person name="King A."/>
            <person name="Laird G.K."/>
            <person name="Langford C."/>
            <person name="Lawlor S."/>
            <person name="Leongamornlert D.A."/>
            <person name="Leversha M."/>
            <person name="Lloyd C.R."/>
            <person name="Lloyd D.M."/>
            <person name="Loveland J.E."/>
            <person name="Lovell J."/>
            <person name="Martin S."/>
            <person name="Mashreghi-Mohammadi M."/>
            <person name="Maslen G.L."/>
            <person name="Matthews L."/>
            <person name="McCann O.T."/>
            <person name="McLaren S.J."/>
            <person name="McLay K."/>
            <person name="McMurray A."/>
            <person name="Moore M.J.F."/>
            <person name="Mullikin J.C."/>
            <person name="Niblett D."/>
            <person name="Nickerson T."/>
            <person name="Novik K.L."/>
            <person name="Oliver K."/>
            <person name="Overton-Larty E.K."/>
            <person name="Parker A."/>
            <person name="Patel R."/>
            <person name="Pearce A.V."/>
            <person name="Peck A.I."/>
            <person name="Phillimore B.J.C.T."/>
            <person name="Phillips S."/>
            <person name="Plumb R.W."/>
            <person name="Porter K.M."/>
            <person name="Ramsey Y."/>
            <person name="Ranby S.A."/>
            <person name="Rice C.M."/>
            <person name="Ross M.T."/>
            <person name="Searle S.M."/>
            <person name="Sehra H.K."/>
            <person name="Sheridan E."/>
            <person name="Skuce C.D."/>
            <person name="Smith S."/>
            <person name="Smith M."/>
            <person name="Spraggon L."/>
            <person name="Squares S.L."/>
            <person name="Steward C.A."/>
            <person name="Sycamore N."/>
            <person name="Tamlyn-Hall G."/>
            <person name="Tester J."/>
            <person name="Theaker A.J."/>
            <person name="Thomas D.W."/>
            <person name="Thorpe A."/>
            <person name="Tracey A."/>
            <person name="Tromans A."/>
            <person name="Tubby B."/>
            <person name="Wall M."/>
            <person name="Wallis J.M."/>
            <person name="West A.P."/>
            <person name="White S.S."/>
            <person name="Whitehead S.L."/>
            <person name="Whittaker H."/>
            <person name="Wild A."/>
            <person name="Willey D.J."/>
            <person name="Wilmer T.E."/>
            <person name="Wood J.M."/>
            <person name="Wray P.W."/>
            <person name="Wyatt J.C."/>
            <person name="Young L."/>
            <person name="Younger R.M."/>
            <person name="Bentley D.R."/>
            <person name="Coulson A."/>
            <person name="Durbin R.M."/>
            <person name="Hubbard T."/>
            <person name="Sulston J.E."/>
            <person name="Dunham I."/>
            <person name="Rogers J."/>
            <person name="Beck S."/>
        </authorList>
    </citation>
    <scope>NUCLEOTIDE SEQUENCE [LARGE SCALE GENOMIC DNA]</scope>
</reference>
<reference key="4">
    <citation type="journal article" date="2004" name="Genome Res.">
        <title>The status, quality, and expansion of the NIH full-length cDNA project: the Mammalian Gene Collection (MGC).</title>
        <authorList>
            <consortium name="The MGC Project Team"/>
        </authorList>
    </citation>
    <scope>NUCLEOTIDE SEQUENCE [LARGE SCALE MRNA] (ISOFORM 1)</scope>
    <source>
        <tissue>Brain</tissue>
        <tissue>Pancreas</tissue>
    </source>
</reference>
<reference key="5">
    <citation type="journal article" date="2008" name="Proc. Natl. Acad. Sci. U.S.A.">
        <title>A quantitative atlas of mitotic phosphorylation.</title>
        <authorList>
            <person name="Dephoure N."/>
            <person name="Zhou C."/>
            <person name="Villen J."/>
            <person name="Beausoleil S.A."/>
            <person name="Bakalarski C.E."/>
            <person name="Elledge S.J."/>
            <person name="Gygi S.P."/>
        </authorList>
    </citation>
    <scope>PHOSPHORYLATION [LARGE SCALE ANALYSIS] AT SER-114</scope>
    <scope>IDENTIFICATION BY MASS SPECTROMETRY [LARGE SCALE ANALYSIS]</scope>
    <source>
        <tissue>Cervix carcinoma</tissue>
    </source>
</reference>
<reference key="6">
    <citation type="journal article" date="2013" name="J. Proteome Res.">
        <title>Toward a comprehensive characterization of a human cancer cell phosphoproteome.</title>
        <authorList>
            <person name="Zhou H."/>
            <person name="Di Palma S."/>
            <person name="Preisinger C."/>
            <person name="Peng M."/>
            <person name="Polat A.N."/>
            <person name="Heck A.J."/>
            <person name="Mohammed S."/>
        </authorList>
    </citation>
    <scope>PHOSPHORYLATION [LARGE SCALE ANALYSIS] AT SER-111</scope>
    <scope>IDENTIFICATION BY MASS SPECTROMETRY [LARGE SCALE ANALYSIS]</scope>
    <source>
        <tissue>Cervix carcinoma</tissue>
        <tissue>Erythroleukemia</tissue>
    </source>
</reference>
<reference key="7">
    <citation type="journal article" date="2014" name="J. Proteomics">
        <title>An enzyme assisted RP-RPLC approach for in-depth analysis of human liver phosphoproteome.</title>
        <authorList>
            <person name="Bian Y."/>
            <person name="Song C."/>
            <person name="Cheng K."/>
            <person name="Dong M."/>
            <person name="Wang F."/>
            <person name="Huang J."/>
            <person name="Sun D."/>
            <person name="Wang L."/>
            <person name="Ye M."/>
            <person name="Zou H."/>
        </authorList>
    </citation>
    <scope>IDENTIFICATION BY MASS SPECTROMETRY [LARGE SCALE ANALYSIS]</scope>
    <source>
        <tissue>Liver</tissue>
    </source>
</reference>
<reference key="8">
    <citation type="journal article" date="2023" name="Am. J. Hum. Genet.">
        <title>Stretch-activated ion channel TMEM63B associates with developmental and epileptic encephalopathies and progressive neurodegeneration.</title>
        <authorList>
            <consortium name="TMEM63B collaborators"/>
            <consortium name="Genomics England Research Consortium"/>
            <person name="Vetro A."/>
            <person name="Pelorosso C."/>
            <person name="Balestrini S."/>
            <person name="Masi A."/>
            <person name="Hambleton S."/>
            <person name="Argilli E."/>
            <person name="Conti V."/>
            <person name="Giubbolini S."/>
            <person name="Barrick R."/>
            <person name="Bergant G."/>
            <person name="Writzl K."/>
            <person name="Bijlsma E.K."/>
            <person name="Brunet T."/>
            <person name="Cacheiro P."/>
            <person name="Mei D."/>
            <person name="Devlin A."/>
            <person name="Hoffer M.J.V."/>
            <person name="Machol K."/>
            <person name="Mannaioni G."/>
            <person name="Sakamoto M."/>
            <person name="Menezes M.P."/>
            <person name="Courtin T."/>
            <person name="Sherr E."/>
            <person name="Parra R."/>
            <person name="Richardson R."/>
            <person name="Roscioli T."/>
            <person name="Scala M."/>
            <person name="von Stuelpnagel C."/>
            <person name="Smedley D."/>
            <person name="Torella A."/>
            <person name="Tohyama J."/>
            <person name="Koichihara R."/>
            <person name="Hamada K."/>
            <person name="Ogata K."/>
            <person name="Suzuki T."/>
            <person name="Sugie A."/>
            <person name="van der Smagt J.J."/>
            <person name="van Gassen K."/>
            <person name="Valence S."/>
            <person name="Vittery E."/>
            <person name="Malone S."/>
            <person name="Kato M."/>
            <person name="Matsumoto N."/>
            <person name="Ratto G.M."/>
            <person name="Guerrini R."/>
        </authorList>
    </citation>
    <scope>INVOLVEMENT IN NEURODEVELOMENTAL DISORDER</scope>
    <scope>VARIANTS MET-44; HIS-433; GLU-459; ILE-463; ILE-475 DEL; ASN-481; SER-580; CYS-580; THR-660 AND LEU-697</scope>
    <scope>CHARACTERIZATION OF VARIANTS MET-44; HIS-433; ASN-481; SER-580; THR-660 AND LEU-697</scope>
</reference>
<reference key="9">
    <citation type="journal article" date="2024" name="J. Clin. Invest.">
        <title>Mechanosensitive channels TMEM63A and TMEM63B mediate lung inflation-induced surfactant secretion.</title>
        <authorList>
            <person name="Chen G.L."/>
            <person name="Li J.Y."/>
            <person name="Chen X."/>
            <person name="Liu J.W."/>
            <person name="Zhang Q."/>
            <person name="Liu J.Y."/>
            <person name="Wen J."/>
            <person name="Wang N."/>
            <person name="Lei M."/>
            <person name="Wei J.P."/>
            <person name="Yi L."/>
            <person name="Li J.J."/>
            <person name="Ling Y.P."/>
            <person name="Yi H.Q."/>
            <person name="Hu Z."/>
            <person name="Duan J."/>
            <person name="Zhang J."/>
            <person name="Zeng B."/>
        </authorList>
    </citation>
    <scope>FUNCTION</scope>
    <scope>TRANSPORTER ACTIVITY</scope>
    <scope>SUBCELLULAR LOCATION</scope>
</reference>
<reference key="10">
    <citation type="journal article" date="2024" name="FEBS Lett.">
        <title>Membrane structure-responsive lipid scramblase activity of the TMEM63/OSCA family.</title>
        <authorList>
            <person name="Miyata Y."/>
            <person name="Nishimura M."/>
            <person name="Nagata A."/>
            <person name="Jing X."/>
            <person name="Sultan C.S."/>
            <person name="Kuribayashi R."/>
            <person name="Takahashi K."/>
            <person name="Lee Y."/>
            <person name="Nishizawa T."/>
            <person name="Segawa K."/>
        </authorList>
    </citation>
    <scope>FUNCTION</scope>
    <scope>SUBCELLULAR LOCATION</scope>
    <scope>INVOLVEMENT IN NEURODEVELOMENTAL DISORDER</scope>
    <scope>CHARACTERIZATION OF VARIANTS MET-44; HIS-433; GLU-459; ILE-463; ILE-475 DEL; ASN-481; SER-580; CYS-580; THR-660 AND LEU-697</scope>
</reference>
<reference key="11">
    <citation type="journal article" date="2024" name="Nat. Commun.">
        <title>Phospholipid scrambling induced by an ion channel/metabolite transporter complex.</title>
        <authorList>
            <person name="Niu H."/>
            <person name="Maruoka M."/>
            <person name="Noguchi Y."/>
            <person name="Kosako H."/>
            <person name="Suzuki J."/>
        </authorList>
    </citation>
    <scope>FUNCTION</scope>
    <scope>SUBCELLULAR LOCATION</scope>
    <scope>INVOLVEMENT IN NEURODEVELOMENTAL DISORDER</scope>
    <scope>CHARACTERIZATION OF VARIANTS MET-44; HIS-433; GLU-459; ILE-475 DEL AND THR-660</scope>
</reference>
<reference key="12">
    <citation type="journal article" date="2024" name="Nat. Struct. Mol. Biol.">
        <title>Membrane structure-responsive lipid scrambling by TMEM63B to control plasma membrane lipid distribution.</title>
        <authorList>
            <person name="Miyata Y."/>
            <person name="Takahashi K."/>
            <person name="Lee Y."/>
            <person name="Sultan C.S."/>
            <person name="Kuribayashi R."/>
            <person name="Takahashi M."/>
            <person name="Hata K."/>
            <person name="Bamba T."/>
            <person name="Izumi Y."/>
            <person name="Liu K."/>
            <person name="Uemura T."/>
            <person name="Nomura N."/>
            <person name="Iwata S."/>
            <person name="Nagata S."/>
            <person name="Nishizawa T."/>
            <person name="Segawa K."/>
        </authorList>
    </citation>
    <scope>FUNCTION</scope>
    <scope>INVOLVEMENT IN NEURODEVELOMENTAL DISORDER</scope>
    <scope>CHARACTERIZATION OF VARIANT MET-44</scope>
</reference>
<reference key="13">
    <citation type="journal article" date="2023" name="Neuron">
        <title>TMEM63 proteins function as monomeric high-threshold mechanosensitive ion channels.</title>
        <authorList>
            <person name="Zheng W."/>
            <person name="Rawson S."/>
            <person name="Shen Z."/>
            <person name="Tamilselvan E."/>
            <person name="Smith H.E."/>
            <person name="Halford J."/>
            <person name="Shen C."/>
            <person name="Murthy S.E."/>
            <person name="Ulbrich M.H."/>
            <person name="Sotomayor M."/>
            <person name="Fu T.M."/>
            <person name="Holt J.R."/>
        </authorList>
    </citation>
    <scope>STRUCTURE BY ELECTRON MICROSCOPY (3.60 ANGSTROMS)</scope>
    <scope>FUNCTION</scope>
    <scope>SUBUNIT</scope>
    <scope>SUBCELLULAR LOCATION</scope>
    <scope>GLYCOSYLATION</scope>
    <scope>TOPOLOGY</scope>
    <scope>MUTAGENESIS OF ASP-584</scope>
</reference>
<reference evidence="21" key="14">
    <citation type="journal article" date="2024" name="Nature">
        <title>Mechanical activation opens a lipid-lined pore in OSCA ion channels.</title>
        <authorList>
            <person name="Han Y."/>
            <person name="Zhou Z."/>
            <person name="Jin R."/>
            <person name="Dai F."/>
            <person name="Ge Y."/>
            <person name="Ju X."/>
            <person name="Ma X."/>
            <person name="He S."/>
            <person name="Yuan L."/>
            <person name="Wang Y."/>
            <person name="Yang W."/>
            <person name="Yue X."/>
            <person name="Chen Z."/>
            <person name="Sun Y."/>
            <person name="Corry B."/>
            <person name="Cox C.D."/>
            <person name="Zhang Y."/>
        </authorList>
    </citation>
    <scope>STRUCTURE BY ELECTRON MICROSCOPY (3.84 ANGSTROMS)</scope>
    <scope>SUBUNIT</scope>
</reference>
<organism>
    <name type="scientific">Homo sapiens</name>
    <name type="common">Human</name>
    <dbReference type="NCBI Taxonomy" id="9606"/>
    <lineage>
        <taxon>Eukaryota</taxon>
        <taxon>Metazoa</taxon>
        <taxon>Chordata</taxon>
        <taxon>Craniata</taxon>
        <taxon>Vertebrata</taxon>
        <taxon>Euteleostomi</taxon>
        <taxon>Mammalia</taxon>
        <taxon>Eutheria</taxon>
        <taxon>Euarchontoglires</taxon>
        <taxon>Primates</taxon>
        <taxon>Haplorrhini</taxon>
        <taxon>Catarrhini</taxon>
        <taxon>Hominidae</taxon>
        <taxon>Homo</taxon>
    </lineage>
</organism>
<dbReference type="EMBL" id="AK093629">
    <property type="protein sequence ID" value="BAC04207.1"/>
    <property type="molecule type" value="mRNA"/>
</dbReference>
<dbReference type="EMBL" id="AL353957">
    <property type="protein sequence ID" value="CAB89257.1"/>
    <property type="molecule type" value="mRNA"/>
</dbReference>
<dbReference type="EMBL" id="AL834238">
    <property type="protein sequence ID" value="CAD38916.1"/>
    <property type="molecule type" value="mRNA"/>
</dbReference>
<dbReference type="EMBL" id="CR627460">
    <property type="protein sequence ID" value="CAH10540.1"/>
    <property type="status" value="ALT_FRAME"/>
    <property type="molecule type" value="mRNA"/>
</dbReference>
<dbReference type="EMBL" id="AL365192">
    <property type="status" value="NOT_ANNOTATED_CDS"/>
    <property type="molecule type" value="Genomic_DNA"/>
</dbReference>
<dbReference type="EMBL" id="BC062989">
    <property type="protein sequence ID" value="AAH62989.1"/>
    <property type="molecule type" value="mRNA"/>
</dbReference>
<dbReference type="EMBL" id="BC136769">
    <property type="protein sequence ID" value="AAI36770.1"/>
    <property type="molecule type" value="mRNA"/>
</dbReference>
<dbReference type="CCDS" id="CCDS34461.1">
    <molecule id="Q5T3F8-1"/>
</dbReference>
<dbReference type="PIR" id="T48692">
    <property type="entry name" value="T48692"/>
</dbReference>
<dbReference type="RefSeq" id="NP_001305721.1">
    <molecule id="Q5T3F8-1"/>
    <property type="nucleotide sequence ID" value="NM_001318792.1"/>
</dbReference>
<dbReference type="RefSeq" id="NP_060896.1">
    <molecule id="Q5T3F8-1"/>
    <property type="nucleotide sequence ID" value="NM_018426.3"/>
</dbReference>
<dbReference type="RefSeq" id="XP_005249270.1">
    <molecule id="Q5T3F8-1"/>
    <property type="nucleotide sequence ID" value="XM_005249213.5"/>
</dbReference>
<dbReference type="RefSeq" id="XP_005249274.1">
    <molecule id="Q5T3F8-1"/>
    <property type="nucleotide sequence ID" value="XM_005249217.2"/>
</dbReference>
<dbReference type="RefSeq" id="XP_006715198.1">
    <molecule id="Q5T3F8-1"/>
    <property type="nucleotide sequence ID" value="XM_006715135.2"/>
</dbReference>
<dbReference type="RefSeq" id="XP_016866489.1">
    <property type="nucleotide sequence ID" value="XM_017011000.1"/>
</dbReference>
<dbReference type="RefSeq" id="XP_047274928.1">
    <molecule id="Q5T3F8-1"/>
    <property type="nucleotide sequence ID" value="XM_047418972.1"/>
</dbReference>
<dbReference type="RefSeq" id="XP_047274929.1">
    <molecule id="Q5T3F8-1"/>
    <property type="nucleotide sequence ID" value="XM_047418973.1"/>
</dbReference>
<dbReference type="RefSeq" id="XP_054211761.1">
    <molecule id="Q5T3F8-1"/>
    <property type="nucleotide sequence ID" value="XM_054355786.1"/>
</dbReference>
<dbReference type="RefSeq" id="XP_054211762.1">
    <molecule id="Q5T3F8-1"/>
    <property type="nucleotide sequence ID" value="XM_054355787.1"/>
</dbReference>
<dbReference type="RefSeq" id="XP_054211763.1">
    <molecule id="Q5T3F8-1"/>
    <property type="nucleotide sequence ID" value="XM_054355788.1"/>
</dbReference>
<dbReference type="RefSeq" id="XP_054211764.1">
    <molecule id="Q5T3F8-1"/>
    <property type="nucleotide sequence ID" value="XM_054355789.1"/>
</dbReference>
<dbReference type="RefSeq" id="XP_054211765.1">
    <molecule id="Q5T3F8-1"/>
    <property type="nucleotide sequence ID" value="XM_054355790.1"/>
</dbReference>
<dbReference type="PDB" id="8EHX">
    <property type="method" value="EM"/>
    <property type="resolution" value="3.60 A"/>
    <property type="chains" value="A=1-832"/>
</dbReference>
<dbReference type="PDB" id="8XW4">
    <property type="method" value="EM"/>
    <property type="resolution" value="3.84 A"/>
    <property type="chains" value="A=1-832"/>
</dbReference>
<dbReference type="PDBsum" id="8EHX"/>
<dbReference type="PDBsum" id="8XW4"/>
<dbReference type="EMDB" id="EMD-28154"/>
<dbReference type="EMDB" id="EMD-38730"/>
<dbReference type="SMR" id="Q5T3F8"/>
<dbReference type="BioGRID" id="120640">
    <property type="interactions" value="154"/>
</dbReference>
<dbReference type="FunCoup" id="Q5T3F8">
    <property type="interactions" value="681"/>
</dbReference>
<dbReference type="IntAct" id="Q5T3F8">
    <property type="interactions" value="142"/>
</dbReference>
<dbReference type="MINT" id="Q5T3F8"/>
<dbReference type="STRING" id="9606.ENSP00000259746"/>
<dbReference type="TCDB" id="1.A.17.5.3">
    <property type="family name" value="the calcium-dependent chloride channel (ca-clc) family"/>
</dbReference>
<dbReference type="GlyGen" id="Q5T3F8">
    <property type="glycosylation" value="3 sites, 2 N-linked glycans (2 sites)"/>
</dbReference>
<dbReference type="iPTMnet" id="Q5T3F8"/>
<dbReference type="PhosphoSitePlus" id="Q5T3F8"/>
<dbReference type="SwissPalm" id="Q5T3F8"/>
<dbReference type="BioMuta" id="TMEM63B"/>
<dbReference type="DMDM" id="74744754"/>
<dbReference type="jPOST" id="Q5T3F8"/>
<dbReference type="MassIVE" id="Q5T3F8"/>
<dbReference type="PaxDb" id="9606-ENSP00000259746"/>
<dbReference type="PeptideAtlas" id="Q5T3F8"/>
<dbReference type="ProteomicsDB" id="64388">
    <molecule id="Q5T3F8-1"/>
</dbReference>
<dbReference type="ProteomicsDB" id="64389">
    <molecule id="Q5T3F8-2"/>
</dbReference>
<dbReference type="ProteomicsDB" id="64390">
    <molecule id="Q5T3F8-3"/>
</dbReference>
<dbReference type="Pumba" id="Q5T3F8"/>
<dbReference type="Antibodypedia" id="30591">
    <property type="antibodies" value="35 antibodies from 13 providers"/>
</dbReference>
<dbReference type="DNASU" id="55362"/>
<dbReference type="Ensembl" id="ENST00000259746.13">
    <molecule id="Q5T3F8-1"/>
    <property type="protein sequence ID" value="ENSP00000259746.9"/>
    <property type="gene ID" value="ENSG00000137216.19"/>
</dbReference>
<dbReference type="Ensembl" id="ENST00000323267.11">
    <molecule id="Q5T3F8-1"/>
    <property type="protein sequence ID" value="ENSP00000327154.6"/>
    <property type="gene ID" value="ENSG00000137216.19"/>
</dbReference>
<dbReference type="GeneID" id="55362"/>
<dbReference type="KEGG" id="hsa:55362"/>
<dbReference type="MANE-Select" id="ENST00000323267.11">
    <property type="protein sequence ID" value="ENSP00000327154.6"/>
    <property type="RefSeq nucleotide sequence ID" value="NM_018426.3"/>
    <property type="RefSeq protein sequence ID" value="NP_060896.1"/>
</dbReference>
<dbReference type="UCSC" id="uc003owr.4">
    <molecule id="Q5T3F8-1"/>
    <property type="organism name" value="human"/>
</dbReference>
<dbReference type="AGR" id="HGNC:17735"/>
<dbReference type="CTD" id="55362"/>
<dbReference type="DisGeNET" id="55362"/>
<dbReference type="GeneCards" id="TMEM63B"/>
<dbReference type="HGNC" id="HGNC:17735">
    <property type="gene designation" value="TMEM63B"/>
</dbReference>
<dbReference type="HPA" id="ENSG00000137216">
    <property type="expression patterns" value="Low tissue specificity"/>
</dbReference>
<dbReference type="MalaCards" id="TMEM63B"/>
<dbReference type="MIM" id="619952">
    <property type="type" value="gene"/>
</dbReference>
<dbReference type="neXtProt" id="NX_Q5T3F8"/>
<dbReference type="OpenTargets" id="ENSG00000137216"/>
<dbReference type="PharmGKB" id="PA134911221"/>
<dbReference type="VEuPathDB" id="HostDB:ENSG00000137216"/>
<dbReference type="eggNOG" id="KOG1134">
    <property type="taxonomic scope" value="Eukaryota"/>
</dbReference>
<dbReference type="GeneTree" id="ENSGT00940000157084"/>
<dbReference type="InParanoid" id="Q5T3F8"/>
<dbReference type="OMA" id="NWACVAL"/>
<dbReference type="OrthoDB" id="1689567at2759"/>
<dbReference type="PAN-GO" id="Q5T3F8">
    <property type="GO annotations" value="2 GO annotations based on evolutionary models"/>
</dbReference>
<dbReference type="PhylomeDB" id="Q5T3F8"/>
<dbReference type="TreeFam" id="TF324300"/>
<dbReference type="PathwayCommons" id="Q5T3F8"/>
<dbReference type="SignaLink" id="Q5T3F8"/>
<dbReference type="BioGRID-ORCS" id="55362">
    <property type="hits" value="17 hits in 1161 CRISPR screens"/>
</dbReference>
<dbReference type="GenomeRNAi" id="55362"/>
<dbReference type="Pharos" id="Q5T3F8">
    <property type="development level" value="Tdark"/>
</dbReference>
<dbReference type="PRO" id="PR:Q5T3F8"/>
<dbReference type="Proteomes" id="UP000005640">
    <property type="component" value="Chromosome 6"/>
</dbReference>
<dbReference type="RNAct" id="Q5T3F8">
    <property type="molecule type" value="protein"/>
</dbReference>
<dbReference type="Bgee" id="ENSG00000137216">
    <property type="expression patterns" value="Expressed in cardiac muscle of right atrium and 184 other cell types or tissues"/>
</dbReference>
<dbReference type="ExpressionAtlas" id="Q5T3F8">
    <property type="expression patterns" value="baseline and differential"/>
</dbReference>
<dbReference type="GO" id="GO:0015629">
    <property type="term" value="C:actin cytoskeleton"/>
    <property type="evidence" value="ECO:0000314"/>
    <property type="project" value="HPA"/>
</dbReference>
<dbReference type="GO" id="GO:0097233">
    <property type="term" value="C:alveolar lamellar body membrane"/>
    <property type="evidence" value="ECO:0000314"/>
    <property type="project" value="UniProtKB"/>
</dbReference>
<dbReference type="GO" id="GO:0031901">
    <property type="term" value="C:early endosome membrane"/>
    <property type="evidence" value="ECO:0000314"/>
    <property type="project" value="UniProtKB"/>
</dbReference>
<dbReference type="GO" id="GO:0005765">
    <property type="term" value="C:lysosomal membrane"/>
    <property type="evidence" value="ECO:0000314"/>
    <property type="project" value="UniProtKB"/>
</dbReference>
<dbReference type="GO" id="GO:0005886">
    <property type="term" value="C:plasma membrane"/>
    <property type="evidence" value="ECO:0000314"/>
    <property type="project" value="HPA"/>
</dbReference>
<dbReference type="GO" id="GO:0005227">
    <property type="term" value="F:calcium-activated cation channel activity"/>
    <property type="evidence" value="ECO:0000314"/>
    <property type="project" value="UniProtKB"/>
</dbReference>
<dbReference type="GO" id="GO:0140135">
    <property type="term" value="F:mechanosensitive monoatomic cation channel activity"/>
    <property type="evidence" value="ECO:0000314"/>
    <property type="project" value="UniProtKB"/>
</dbReference>
<dbReference type="GO" id="GO:0008381">
    <property type="term" value="F:mechanosensitive monoatomic ion channel activity"/>
    <property type="evidence" value="ECO:0000314"/>
    <property type="project" value="UniProtKB"/>
</dbReference>
<dbReference type="GO" id="GO:1990760">
    <property type="term" value="F:osmolarity-sensing monoatomic cation channel activity"/>
    <property type="evidence" value="ECO:0000250"/>
    <property type="project" value="UniProtKB"/>
</dbReference>
<dbReference type="GO" id="GO:0120019">
    <property type="term" value="F:phosphatidylcholine transfer activity"/>
    <property type="evidence" value="ECO:0000250"/>
    <property type="project" value="UniProtKB"/>
</dbReference>
<dbReference type="GO" id="GO:0017128">
    <property type="term" value="F:phospholipid scramblase activity"/>
    <property type="evidence" value="ECO:0000314"/>
    <property type="project" value="UniProtKB"/>
</dbReference>
<dbReference type="GO" id="GO:0140338">
    <property type="term" value="F:sphingomyelin transfer activity"/>
    <property type="evidence" value="ECO:0000250"/>
    <property type="project" value="UniProtKB"/>
</dbReference>
<dbReference type="GO" id="GO:0042756">
    <property type="term" value="P:drinking behavior"/>
    <property type="evidence" value="ECO:0000250"/>
    <property type="project" value="UniProtKB"/>
</dbReference>
<dbReference type="GO" id="GO:0006887">
    <property type="term" value="P:exocytosis"/>
    <property type="evidence" value="ECO:0007669"/>
    <property type="project" value="UniProtKB-KW"/>
</dbReference>
<dbReference type="GO" id="GO:0036335">
    <property type="term" value="P:intestinal stem cell homeostasis"/>
    <property type="evidence" value="ECO:0000250"/>
    <property type="project" value="UniProtKB"/>
</dbReference>
<dbReference type="GO" id="GO:0007605">
    <property type="term" value="P:sensory perception of sound"/>
    <property type="evidence" value="ECO:0000250"/>
    <property type="project" value="UniProtKB"/>
</dbReference>
<dbReference type="GO" id="GO:0160069">
    <property type="term" value="P:surfactant secretion"/>
    <property type="evidence" value="ECO:0000250"/>
    <property type="project" value="UniProtKB"/>
</dbReference>
<dbReference type="InterPro" id="IPR045122">
    <property type="entry name" value="Csc1-like"/>
</dbReference>
<dbReference type="InterPro" id="IPR003864">
    <property type="entry name" value="CSC1/OSCA1-like_7TM"/>
</dbReference>
<dbReference type="InterPro" id="IPR027815">
    <property type="entry name" value="CSC1/OSCA1-like_cyt"/>
</dbReference>
<dbReference type="InterPro" id="IPR032880">
    <property type="entry name" value="Csc1/OSCA1-like_N"/>
</dbReference>
<dbReference type="PANTHER" id="PTHR13018:SF38">
    <property type="entry name" value="CSC1-LIKE PROTEIN 2"/>
    <property type="match status" value="1"/>
</dbReference>
<dbReference type="PANTHER" id="PTHR13018">
    <property type="entry name" value="PROBABLE MEMBRANE PROTEIN DUF221-RELATED"/>
    <property type="match status" value="1"/>
</dbReference>
<dbReference type="Pfam" id="PF14703">
    <property type="entry name" value="PHM7_cyt"/>
    <property type="match status" value="1"/>
</dbReference>
<dbReference type="Pfam" id="PF02714">
    <property type="entry name" value="RSN1_7TM"/>
    <property type="match status" value="1"/>
</dbReference>
<dbReference type="Pfam" id="PF13967">
    <property type="entry name" value="RSN1_TM"/>
    <property type="match status" value="1"/>
</dbReference>
<keyword id="KW-0002">3D-structure</keyword>
<keyword id="KW-0025">Alternative splicing</keyword>
<keyword id="KW-0106">Calcium</keyword>
<keyword id="KW-1003">Cell membrane</keyword>
<keyword id="KW-0256">Endoplasmic reticulum</keyword>
<keyword id="KW-0967">Endosome</keyword>
<keyword id="KW-0268">Exocytosis</keyword>
<keyword id="KW-0325">Glycoprotein</keyword>
<keyword id="KW-1009">Hearing</keyword>
<keyword id="KW-0407">Ion channel</keyword>
<keyword id="KW-0406">Ion transport</keyword>
<keyword id="KW-0449">Lipoprotein</keyword>
<keyword id="KW-0458">Lysosome</keyword>
<keyword id="KW-0472">Membrane</keyword>
<keyword id="KW-0564">Palmitate</keyword>
<keyword id="KW-0597">Phosphoprotein</keyword>
<keyword id="KW-1267">Proteomics identification</keyword>
<keyword id="KW-1185">Reference proteome</keyword>
<keyword id="KW-0812">Transmembrane</keyword>
<keyword id="KW-1133">Transmembrane helix</keyword>
<keyword id="KW-0813">Transport</keyword>